<evidence type="ECO:0000255" key="1">
    <source>
        <dbReference type="HAMAP-Rule" id="MF_00360"/>
    </source>
</evidence>
<evidence type="ECO:0000256" key="2">
    <source>
        <dbReference type="SAM" id="MobiDB-lite"/>
    </source>
</evidence>
<evidence type="ECO:0000305" key="3"/>
<gene>
    <name evidence="1" type="primary">rpsF</name>
    <name type="ordered locus">PsycPRwf_1640</name>
</gene>
<feature type="chain" id="PRO_1000079460" description="Small ribosomal subunit protein bS6">
    <location>
        <begin position="1"/>
        <end position="134"/>
    </location>
</feature>
<feature type="region of interest" description="Disordered" evidence="2">
    <location>
        <begin position="99"/>
        <end position="134"/>
    </location>
</feature>
<feature type="compositionally biased region" description="Basic and acidic residues" evidence="2">
    <location>
        <begin position="105"/>
        <end position="119"/>
    </location>
</feature>
<feature type="compositionally biased region" description="Acidic residues" evidence="2">
    <location>
        <begin position="120"/>
        <end position="134"/>
    </location>
</feature>
<reference key="1">
    <citation type="submission" date="2007-05" db="EMBL/GenBank/DDBJ databases">
        <title>Complete sequence of chromosome of Psychrobacter sp. PRwf-1.</title>
        <authorList>
            <consortium name="US DOE Joint Genome Institute"/>
            <person name="Copeland A."/>
            <person name="Lucas S."/>
            <person name="Lapidus A."/>
            <person name="Barry K."/>
            <person name="Detter J.C."/>
            <person name="Glavina del Rio T."/>
            <person name="Hammon N."/>
            <person name="Israni S."/>
            <person name="Dalin E."/>
            <person name="Tice H."/>
            <person name="Pitluck S."/>
            <person name="Chain P."/>
            <person name="Malfatti S."/>
            <person name="Shin M."/>
            <person name="Vergez L."/>
            <person name="Schmutz J."/>
            <person name="Larimer F."/>
            <person name="Land M."/>
            <person name="Hauser L."/>
            <person name="Kyrpides N."/>
            <person name="Kim E."/>
            <person name="Tiedje J."/>
            <person name="Richardson P."/>
        </authorList>
    </citation>
    <scope>NUCLEOTIDE SEQUENCE [LARGE SCALE GENOMIC DNA]</scope>
    <source>
        <strain>PRwf-1</strain>
    </source>
</reference>
<comment type="function">
    <text evidence="1">Binds together with bS18 to 16S ribosomal RNA.</text>
</comment>
<comment type="similarity">
    <text evidence="1">Belongs to the bacterial ribosomal protein bS6 family.</text>
</comment>
<sequence>MRHYEVVLIVHPDQSDQVVGMVERYIKLVQDNNGMVHRLEDWGRRQLAYPINKIHKAHYVLFNIECDGATLEELEELFRYNDAIIRSLVVRRDDAITEPSQLAKSADEKRARKAPRSENFDNDQDDESNDDSDE</sequence>
<name>RS6_PSYWF</name>
<protein>
    <recommendedName>
        <fullName evidence="1">Small ribosomal subunit protein bS6</fullName>
    </recommendedName>
    <alternativeName>
        <fullName evidence="3">30S ribosomal protein S6</fullName>
    </alternativeName>
</protein>
<keyword id="KW-0687">Ribonucleoprotein</keyword>
<keyword id="KW-0689">Ribosomal protein</keyword>
<keyword id="KW-0694">RNA-binding</keyword>
<keyword id="KW-0699">rRNA-binding</keyword>
<organism>
    <name type="scientific">Psychrobacter sp. (strain PRwf-1)</name>
    <dbReference type="NCBI Taxonomy" id="349106"/>
    <lineage>
        <taxon>Bacteria</taxon>
        <taxon>Pseudomonadati</taxon>
        <taxon>Pseudomonadota</taxon>
        <taxon>Gammaproteobacteria</taxon>
        <taxon>Moraxellales</taxon>
        <taxon>Moraxellaceae</taxon>
        <taxon>Psychrobacter</taxon>
    </lineage>
</organism>
<dbReference type="EMBL" id="CP000713">
    <property type="protein sequence ID" value="ABQ94580.1"/>
    <property type="molecule type" value="Genomic_DNA"/>
</dbReference>
<dbReference type="SMR" id="A5WFY9"/>
<dbReference type="STRING" id="349106.PsycPRwf_1640"/>
<dbReference type="KEGG" id="prw:PsycPRwf_1640"/>
<dbReference type="eggNOG" id="COG0360">
    <property type="taxonomic scope" value="Bacteria"/>
</dbReference>
<dbReference type="HOGENOM" id="CLU_113441_6_1_6"/>
<dbReference type="GO" id="GO:0022627">
    <property type="term" value="C:cytosolic small ribosomal subunit"/>
    <property type="evidence" value="ECO:0007669"/>
    <property type="project" value="TreeGrafter"/>
</dbReference>
<dbReference type="GO" id="GO:0070181">
    <property type="term" value="F:small ribosomal subunit rRNA binding"/>
    <property type="evidence" value="ECO:0007669"/>
    <property type="project" value="TreeGrafter"/>
</dbReference>
<dbReference type="GO" id="GO:0003735">
    <property type="term" value="F:structural constituent of ribosome"/>
    <property type="evidence" value="ECO:0007669"/>
    <property type="project" value="InterPro"/>
</dbReference>
<dbReference type="GO" id="GO:0006412">
    <property type="term" value="P:translation"/>
    <property type="evidence" value="ECO:0007669"/>
    <property type="project" value="UniProtKB-UniRule"/>
</dbReference>
<dbReference type="CDD" id="cd00473">
    <property type="entry name" value="bS6"/>
    <property type="match status" value="1"/>
</dbReference>
<dbReference type="Gene3D" id="3.30.70.60">
    <property type="match status" value="1"/>
</dbReference>
<dbReference type="HAMAP" id="MF_00360">
    <property type="entry name" value="Ribosomal_bS6"/>
    <property type="match status" value="1"/>
</dbReference>
<dbReference type="InterPro" id="IPR000529">
    <property type="entry name" value="Ribosomal_bS6"/>
</dbReference>
<dbReference type="InterPro" id="IPR020815">
    <property type="entry name" value="Ribosomal_bS6_CS"/>
</dbReference>
<dbReference type="InterPro" id="IPR035980">
    <property type="entry name" value="Ribosomal_bS6_sf"/>
</dbReference>
<dbReference type="InterPro" id="IPR020814">
    <property type="entry name" value="Ribosomal_S6_plastid/chlpt"/>
</dbReference>
<dbReference type="InterPro" id="IPR014717">
    <property type="entry name" value="Transl_elong_EF1B/ribsomal_bS6"/>
</dbReference>
<dbReference type="NCBIfam" id="TIGR00166">
    <property type="entry name" value="S6"/>
    <property type="match status" value="1"/>
</dbReference>
<dbReference type="PANTHER" id="PTHR21011">
    <property type="entry name" value="MITOCHONDRIAL 28S RIBOSOMAL PROTEIN S6"/>
    <property type="match status" value="1"/>
</dbReference>
<dbReference type="PANTHER" id="PTHR21011:SF1">
    <property type="entry name" value="SMALL RIBOSOMAL SUBUNIT PROTEIN BS6M"/>
    <property type="match status" value="1"/>
</dbReference>
<dbReference type="Pfam" id="PF01250">
    <property type="entry name" value="Ribosomal_S6"/>
    <property type="match status" value="1"/>
</dbReference>
<dbReference type="SUPFAM" id="SSF54995">
    <property type="entry name" value="Ribosomal protein S6"/>
    <property type="match status" value="1"/>
</dbReference>
<dbReference type="PROSITE" id="PS01048">
    <property type="entry name" value="RIBOSOMAL_S6"/>
    <property type="match status" value="1"/>
</dbReference>
<accession>A5WFY9</accession>
<proteinExistence type="inferred from homology"/>